<organism>
    <name type="scientific">Clostridium beijerinckii (strain ATCC 51743 / NCIMB 8052)</name>
    <name type="common">Clostridium acetobutylicum</name>
    <dbReference type="NCBI Taxonomy" id="290402"/>
    <lineage>
        <taxon>Bacteria</taxon>
        <taxon>Bacillati</taxon>
        <taxon>Bacillota</taxon>
        <taxon>Clostridia</taxon>
        <taxon>Eubacteriales</taxon>
        <taxon>Clostridiaceae</taxon>
        <taxon>Clostridium</taxon>
    </lineage>
</organism>
<gene>
    <name evidence="1" type="primary">rhaM</name>
    <name type="ordered locus">Cbei_0452</name>
</gene>
<dbReference type="EC" id="5.1.3.32" evidence="1"/>
<dbReference type="EMBL" id="CP000721">
    <property type="protein sequence ID" value="ABR32640.1"/>
    <property type="molecule type" value="Genomic_DNA"/>
</dbReference>
<dbReference type="RefSeq" id="WP_011967801.1">
    <property type="nucleotide sequence ID" value="NC_009617.1"/>
</dbReference>
<dbReference type="SMR" id="A6LQL0"/>
<dbReference type="KEGG" id="cbe:Cbei_0452"/>
<dbReference type="eggNOG" id="COG3254">
    <property type="taxonomic scope" value="Bacteria"/>
</dbReference>
<dbReference type="HOGENOM" id="CLU_100689_2_0_9"/>
<dbReference type="UniPathway" id="UPA00125"/>
<dbReference type="Proteomes" id="UP000000565">
    <property type="component" value="Chromosome"/>
</dbReference>
<dbReference type="GO" id="GO:0005737">
    <property type="term" value="C:cytoplasm"/>
    <property type="evidence" value="ECO:0007669"/>
    <property type="project" value="UniProtKB-SubCell"/>
</dbReference>
<dbReference type="GO" id="GO:0062192">
    <property type="term" value="F:L-rhamnose mutarotase activity"/>
    <property type="evidence" value="ECO:0007669"/>
    <property type="project" value="UniProtKB-EC"/>
</dbReference>
<dbReference type="GO" id="GO:0019301">
    <property type="term" value="P:rhamnose catabolic process"/>
    <property type="evidence" value="ECO:0007669"/>
    <property type="project" value="TreeGrafter"/>
</dbReference>
<dbReference type="Gene3D" id="3.30.70.100">
    <property type="match status" value="1"/>
</dbReference>
<dbReference type="HAMAP" id="MF_01663">
    <property type="entry name" value="L_rham_rotase"/>
    <property type="match status" value="1"/>
</dbReference>
<dbReference type="InterPro" id="IPR011008">
    <property type="entry name" value="Dimeric_a/b-barrel"/>
</dbReference>
<dbReference type="InterPro" id="IPR013448">
    <property type="entry name" value="L-rhamnose_mutarotase"/>
</dbReference>
<dbReference type="InterPro" id="IPR008000">
    <property type="entry name" value="Rham/fucose_mutarotase"/>
</dbReference>
<dbReference type="NCBIfam" id="TIGR02625">
    <property type="entry name" value="YiiL_rotase"/>
    <property type="match status" value="1"/>
</dbReference>
<dbReference type="PANTHER" id="PTHR34389">
    <property type="entry name" value="L-RHAMNOSE MUTAROTASE"/>
    <property type="match status" value="1"/>
</dbReference>
<dbReference type="PANTHER" id="PTHR34389:SF2">
    <property type="entry name" value="L-RHAMNOSE MUTAROTASE"/>
    <property type="match status" value="1"/>
</dbReference>
<dbReference type="Pfam" id="PF05336">
    <property type="entry name" value="rhaM"/>
    <property type="match status" value="1"/>
</dbReference>
<dbReference type="SUPFAM" id="SSF54909">
    <property type="entry name" value="Dimeric alpha+beta barrel"/>
    <property type="match status" value="1"/>
</dbReference>
<feature type="chain" id="PRO_0000344562" description="L-rhamnose mutarotase">
    <location>
        <begin position="1"/>
        <end position="104"/>
    </location>
</feature>
<feature type="active site" description="Proton donor" evidence="1">
    <location>
        <position position="22"/>
    </location>
</feature>
<feature type="binding site" evidence="1">
    <location>
        <position position="18"/>
    </location>
    <ligand>
        <name>substrate</name>
    </ligand>
</feature>
<feature type="binding site" evidence="1">
    <location>
        <position position="41"/>
    </location>
    <ligand>
        <name>substrate</name>
    </ligand>
</feature>
<feature type="binding site" evidence="1">
    <location>
        <begin position="76"/>
        <end position="77"/>
    </location>
    <ligand>
        <name>substrate</name>
    </ligand>
</feature>
<protein>
    <recommendedName>
        <fullName evidence="1">L-rhamnose mutarotase</fullName>
        <ecNumber evidence="1">5.1.3.32</ecNumber>
    </recommendedName>
    <alternativeName>
        <fullName evidence="1">Rhamnose 1-epimerase</fullName>
    </alternativeName>
    <alternativeName>
        <fullName evidence="1">Type-3 mutarotase</fullName>
    </alternativeName>
</protein>
<evidence type="ECO:0000255" key="1">
    <source>
        <dbReference type="HAMAP-Rule" id="MF_01663"/>
    </source>
</evidence>
<proteinExistence type="inferred from homology"/>
<keyword id="KW-0119">Carbohydrate metabolism</keyword>
<keyword id="KW-0963">Cytoplasm</keyword>
<keyword id="KW-0413">Isomerase</keyword>
<keyword id="KW-0684">Rhamnose metabolism</keyword>
<accession>A6LQL0</accession>
<comment type="function">
    <text evidence="1">Involved in the anomeric conversion of L-rhamnose.</text>
</comment>
<comment type="catalytic activity">
    <reaction evidence="1">
        <text>alpha-L-rhamnose = beta-L-rhamnose</text>
        <dbReference type="Rhea" id="RHEA:25584"/>
        <dbReference type="ChEBI" id="CHEBI:27586"/>
        <dbReference type="ChEBI" id="CHEBI:27907"/>
        <dbReference type="EC" id="5.1.3.32"/>
    </reaction>
</comment>
<comment type="pathway">
    <text evidence="1">Carbohydrate metabolism; L-rhamnose metabolism.</text>
</comment>
<comment type="subunit">
    <text evidence="1">Homodimer.</text>
</comment>
<comment type="subcellular location">
    <subcellularLocation>
        <location evidence="1">Cytoplasm</location>
    </subcellularLocation>
</comment>
<comment type="similarity">
    <text evidence="1">Belongs to the rhamnose mutarotase family.</text>
</comment>
<reference key="1">
    <citation type="submission" date="2007-06" db="EMBL/GenBank/DDBJ databases">
        <title>Complete sequence of Clostridium beijerinckii NCIMB 8052.</title>
        <authorList>
            <consortium name="US DOE Joint Genome Institute"/>
            <person name="Copeland A."/>
            <person name="Lucas S."/>
            <person name="Lapidus A."/>
            <person name="Barry K."/>
            <person name="Detter J.C."/>
            <person name="Glavina del Rio T."/>
            <person name="Hammon N."/>
            <person name="Israni S."/>
            <person name="Dalin E."/>
            <person name="Tice H."/>
            <person name="Pitluck S."/>
            <person name="Sims D."/>
            <person name="Brettin T."/>
            <person name="Bruce D."/>
            <person name="Tapia R."/>
            <person name="Brainard J."/>
            <person name="Schmutz J."/>
            <person name="Larimer F."/>
            <person name="Land M."/>
            <person name="Hauser L."/>
            <person name="Kyrpides N."/>
            <person name="Mikhailova N."/>
            <person name="Bennet G."/>
            <person name="Cann I."/>
            <person name="Chen J.-S."/>
            <person name="Contreras A.L."/>
            <person name="Jones D."/>
            <person name="Kashket E."/>
            <person name="Mitchell W."/>
            <person name="Stoddard S."/>
            <person name="Schwarz W."/>
            <person name="Qureshi N."/>
            <person name="Young M."/>
            <person name="Shi Z."/>
            <person name="Ezeji T."/>
            <person name="White B."/>
            <person name="Blaschek H."/>
            <person name="Richardson P."/>
        </authorList>
    </citation>
    <scope>NUCLEOTIDE SEQUENCE [LARGE SCALE GENOMIC DNA]</scope>
    <source>
        <strain>ATCC 51743 / NCIMB 8052</strain>
    </source>
</reference>
<name>RHAM_CLOB8</name>
<sequence>MIQKAFKMKLFEGKEEEYKKRHNEIWPDLVKELKSHGTSKYLIFYDKDTNILFSYIEMENEELWDEIAETDACKKWWAFMKDIMETNPDNSPISVELSNVFNLK</sequence>